<sequence>MALLRGVFIVAAKRTPFGAYGGLLKDFTPTDMAEFAARAALSAGRVSPETVDSVVVGNVMQSSSDAIYLARHVGLRVGIPKETPAITINRLCGSGFQSIVSGCQEICSRDSEVVLCGGTESMSQAPYCVRNIRFGTKLGSELKLEDTLWTGLTDTHVQMPMAITAENLAVKHQISREDCDRYALQSQQRWKTANDAGYFDNEMAPVEVKTRKGKQTMQVDEHPRPQTTMEQLNKLPPVFKKEGTVTAGNASGVSDGAGAVIIASEDAVKKHNFTPLARIVGYFVSGCDPTIMGIGPVPAISGALKKTGLSLKDMDLVEVNEAFAPQYLAVEKSLNLDPSKTNVNGGAIALGHPLAGSGSRITAHLVHELRRRGGKYAVGSACIGGGQGIAVIIENTA</sequence>
<name>THIM_BOVIN</name>
<keyword id="KW-0007">Acetylation</keyword>
<keyword id="KW-0012">Acyltransferase</keyword>
<keyword id="KW-0276">Fatty acid metabolism</keyword>
<keyword id="KW-0378">Hydrolase</keyword>
<keyword id="KW-0443">Lipid metabolism</keyword>
<keyword id="KW-0496">Mitochondrion</keyword>
<keyword id="KW-0597">Phosphoprotein</keyword>
<keyword id="KW-1185">Reference proteome</keyword>
<keyword id="KW-0808">Transferase</keyword>
<keyword id="KW-0809">Transit peptide</keyword>
<accession>Q3T0R7</accession>
<accession>B4X9P2</accession>
<protein>
    <recommendedName>
        <fullName evidence="6">3-ketoacyl-CoA thiolase, mitochondrial</fullName>
        <ecNumber evidence="3">2.3.1.16</ecNumber>
    </recommendedName>
    <alternativeName>
        <fullName evidence="6">Acetyl-CoA acetyltransferase</fullName>
        <ecNumber evidence="5">2.3.1.9</ecNumber>
    </alternativeName>
    <alternativeName>
        <fullName>Acetyl-CoA acyltransferase</fullName>
    </alternativeName>
    <alternativeName>
        <fullName evidence="6">Acyl-CoA hydrolase, mitochondrial</fullName>
        <ecNumber evidence="3">3.1.2.-</ecNumber>
        <ecNumber evidence="3">3.1.2.1</ecNumber>
        <ecNumber evidence="2">3.1.2.2</ecNumber>
    </alternativeName>
    <alternativeName>
        <fullName>Beta-ketothiolase</fullName>
    </alternativeName>
    <alternativeName>
        <fullName>Mitochondrial 3-oxoacyl-CoA thiolase</fullName>
    </alternativeName>
</protein>
<comment type="function">
    <text evidence="2 3">In the production of energy from fats, this is one of the enzymes that catalyzes the last step of the mitochondrial beta-oxidation pathway, an aerobic process breaking down fatty acids into acetyl-CoA. Using free coenzyme A/CoA, catalyzes the thiolytic cleavage of medium- to long-chain unbranched 3-oxoacyl-CoAs into acetyl-CoA and a fatty acyl-CoA shortened by two carbon atoms. Also catalyzes the condensation of two acetyl-CoA molecules into acetoacetyl-CoA and could be involved in the production of ketone bodies. Also displays hydrolase activity on various fatty acyl-CoAs (By similarity). Thereby, could be responsible for the production of acetate in a side reaction to beta-oxidation (By similarity). Abolishes BNIP3-mediated apoptosis and mitochondrial damage (By similarity).</text>
</comment>
<comment type="catalytic activity">
    <reaction evidence="3">
        <text>an acyl-CoA + acetyl-CoA = a 3-oxoacyl-CoA + CoA</text>
        <dbReference type="Rhea" id="RHEA:21564"/>
        <dbReference type="ChEBI" id="CHEBI:57287"/>
        <dbReference type="ChEBI" id="CHEBI:57288"/>
        <dbReference type="ChEBI" id="CHEBI:58342"/>
        <dbReference type="ChEBI" id="CHEBI:90726"/>
        <dbReference type="EC" id="2.3.1.16"/>
    </reaction>
    <physiologicalReaction direction="left-to-right" evidence="3">
        <dbReference type="Rhea" id="RHEA:21565"/>
    </physiologicalReaction>
    <physiologicalReaction direction="right-to-left" evidence="3">
        <dbReference type="Rhea" id="RHEA:21566"/>
    </physiologicalReaction>
</comment>
<comment type="catalytic activity">
    <reaction evidence="5">
        <text>2 acetyl-CoA = acetoacetyl-CoA + CoA</text>
        <dbReference type="Rhea" id="RHEA:21036"/>
        <dbReference type="ChEBI" id="CHEBI:57286"/>
        <dbReference type="ChEBI" id="CHEBI:57287"/>
        <dbReference type="ChEBI" id="CHEBI:57288"/>
        <dbReference type="EC" id="2.3.1.9"/>
    </reaction>
    <physiologicalReaction direction="left-to-right" evidence="3">
        <dbReference type="Rhea" id="RHEA:21037"/>
    </physiologicalReaction>
    <physiologicalReaction direction="right-to-left" evidence="3">
        <dbReference type="Rhea" id="RHEA:21038"/>
    </physiologicalReaction>
</comment>
<comment type="catalytic activity">
    <reaction evidence="3">
        <text>acetyl-CoA + H2O = acetate + CoA + H(+)</text>
        <dbReference type="Rhea" id="RHEA:20289"/>
        <dbReference type="ChEBI" id="CHEBI:15377"/>
        <dbReference type="ChEBI" id="CHEBI:15378"/>
        <dbReference type="ChEBI" id="CHEBI:30089"/>
        <dbReference type="ChEBI" id="CHEBI:57287"/>
        <dbReference type="ChEBI" id="CHEBI:57288"/>
        <dbReference type="EC" id="3.1.2.1"/>
    </reaction>
    <physiologicalReaction direction="left-to-right" evidence="3">
        <dbReference type="Rhea" id="RHEA:20290"/>
    </physiologicalReaction>
</comment>
<comment type="catalytic activity">
    <reaction evidence="3">
        <text>propanoyl-CoA + H2O = propanoate + CoA + H(+)</text>
        <dbReference type="Rhea" id="RHEA:40103"/>
        <dbReference type="ChEBI" id="CHEBI:15377"/>
        <dbReference type="ChEBI" id="CHEBI:15378"/>
        <dbReference type="ChEBI" id="CHEBI:17272"/>
        <dbReference type="ChEBI" id="CHEBI:57287"/>
        <dbReference type="ChEBI" id="CHEBI:57392"/>
    </reaction>
    <physiologicalReaction direction="left-to-right" evidence="3">
        <dbReference type="Rhea" id="RHEA:40104"/>
    </physiologicalReaction>
</comment>
<comment type="catalytic activity">
    <reaction evidence="3">
        <text>butanoyl-CoA + H2O = butanoate + CoA + H(+)</text>
        <dbReference type="Rhea" id="RHEA:40111"/>
        <dbReference type="ChEBI" id="CHEBI:15377"/>
        <dbReference type="ChEBI" id="CHEBI:15378"/>
        <dbReference type="ChEBI" id="CHEBI:17968"/>
        <dbReference type="ChEBI" id="CHEBI:57287"/>
        <dbReference type="ChEBI" id="CHEBI:57371"/>
    </reaction>
    <physiologicalReaction direction="left-to-right" evidence="3">
        <dbReference type="Rhea" id="RHEA:40112"/>
    </physiologicalReaction>
</comment>
<comment type="catalytic activity">
    <reaction evidence="3">
        <text>hexanoyl-CoA + H2O = hexanoate + CoA + H(+)</text>
        <dbReference type="Rhea" id="RHEA:40115"/>
        <dbReference type="ChEBI" id="CHEBI:15377"/>
        <dbReference type="ChEBI" id="CHEBI:15378"/>
        <dbReference type="ChEBI" id="CHEBI:17120"/>
        <dbReference type="ChEBI" id="CHEBI:57287"/>
        <dbReference type="ChEBI" id="CHEBI:62620"/>
    </reaction>
    <physiologicalReaction direction="left-to-right" evidence="3">
        <dbReference type="Rhea" id="RHEA:40116"/>
    </physiologicalReaction>
</comment>
<comment type="catalytic activity">
    <reaction evidence="3">
        <text>octanoyl-CoA + H2O = octanoate + CoA + H(+)</text>
        <dbReference type="Rhea" id="RHEA:30143"/>
        <dbReference type="ChEBI" id="CHEBI:15377"/>
        <dbReference type="ChEBI" id="CHEBI:15378"/>
        <dbReference type="ChEBI" id="CHEBI:25646"/>
        <dbReference type="ChEBI" id="CHEBI:57287"/>
        <dbReference type="ChEBI" id="CHEBI:57386"/>
    </reaction>
    <physiologicalReaction direction="left-to-right" evidence="3">
        <dbReference type="Rhea" id="RHEA:30144"/>
    </physiologicalReaction>
</comment>
<comment type="catalytic activity">
    <reaction evidence="3">
        <text>decanoyl-CoA + H2O = decanoate + CoA + H(+)</text>
        <dbReference type="Rhea" id="RHEA:40059"/>
        <dbReference type="ChEBI" id="CHEBI:15377"/>
        <dbReference type="ChEBI" id="CHEBI:15378"/>
        <dbReference type="ChEBI" id="CHEBI:27689"/>
        <dbReference type="ChEBI" id="CHEBI:57287"/>
        <dbReference type="ChEBI" id="CHEBI:61430"/>
    </reaction>
    <physiologicalReaction direction="left-to-right" evidence="3">
        <dbReference type="Rhea" id="RHEA:40060"/>
    </physiologicalReaction>
</comment>
<comment type="catalytic activity">
    <reaction evidence="3">
        <text>dodecanoyl-CoA + H2O = dodecanoate + CoA + H(+)</text>
        <dbReference type="Rhea" id="RHEA:30135"/>
        <dbReference type="ChEBI" id="CHEBI:15377"/>
        <dbReference type="ChEBI" id="CHEBI:15378"/>
        <dbReference type="ChEBI" id="CHEBI:18262"/>
        <dbReference type="ChEBI" id="CHEBI:57287"/>
        <dbReference type="ChEBI" id="CHEBI:57375"/>
    </reaction>
    <physiologicalReaction direction="left-to-right" evidence="3">
        <dbReference type="Rhea" id="RHEA:30136"/>
    </physiologicalReaction>
</comment>
<comment type="catalytic activity">
    <reaction evidence="3">
        <text>tetradecanoyl-CoA + H2O = tetradecanoate + CoA + H(+)</text>
        <dbReference type="Rhea" id="RHEA:40119"/>
        <dbReference type="ChEBI" id="CHEBI:15377"/>
        <dbReference type="ChEBI" id="CHEBI:15378"/>
        <dbReference type="ChEBI" id="CHEBI:30807"/>
        <dbReference type="ChEBI" id="CHEBI:57287"/>
        <dbReference type="ChEBI" id="CHEBI:57385"/>
    </reaction>
    <physiologicalReaction direction="left-to-right" evidence="3">
        <dbReference type="Rhea" id="RHEA:40120"/>
    </physiologicalReaction>
</comment>
<comment type="catalytic activity">
    <reaction evidence="2">
        <text>hexadecanoyl-CoA + H2O = hexadecanoate + CoA + H(+)</text>
        <dbReference type="Rhea" id="RHEA:16645"/>
        <dbReference type="ChEBI" id="CHEBI:7896"/>
        <dbReference type="ChEBI" id="CHEBI:15377"/>
        <dbReference type="ChEBI" id="CHEBI:15378"/>
        <dbReference type="ChEBI" id="CHEBI:57287"/>
        <dbReference type="ChEBI" id="CHEBI:57379"/>
        <dbReference type="EC" id="3.1.2.2"/>
    </reaction>
    <physiologicalReaction direction="left-to-right" evidence="3">
        <dbReference type="Rhea" id="RHEA:16646"/>
    </physiologicalReaction>
</comment>
<comment type="pathway">
    <text evidence="3">Lipid metabolism; fatty acid beta-oxidation.</text>
</comment>
<comment type="subunit">
    <text evidence="3">Homotetramer. Interacts with BNIP3.</text>
</comment>
<comment type="subcellular location">
    <subcellularLocation>
        <location evidence="3">Mitochondrion</location>
    </subcellularLocation>
</comment>
<comment type="similarity">
    <text evidence="6">Belongs to the thiolase-like superfamily. Thiolase family.</text>
</comment>
<proteinExistence type="evidence at transcript level"/>
<organism>
    <name type="scientific">Bos taurus</name>
    <name type="common">Bovine</name>
    <dbReference type="NCBI Taxonomy" id="9913"/>
    <lineage>
        <taxon>Eukaryota</taxon>
        <taxon>Metazoa</taxon>
        <taxon>Chordata</taxon>
        <taxon>Craniata</taxon>
        <taxon>Vertebrata</taxon>
        <taxon>Euteleostomi</taxon>
        <taxon>Mammalia</taxon>
        <taxon>Eutheria</taxon>
        <taxon>Laurasiatheria</taxon>
        <taxon>Artiodactyla</taxon>
        <taxon>Ruminantia</taxon>
        <taxon>Pecora</taxon>
        <taxon>Bovidae</taxon>
        <taxon>Bovinae</taxon>
        <taxon>Bos</taxon>
    </lineage>
</organism>
<gene>
    <name type="primary">ACAA2</name>
</gene>
<feature type="chain" id="PRO_0000270498" description="3-ketoacyl-CoA thiolase, mitochondrial">
    <location>
        <begin position="1"/>
        <end position="397"/>
    </location>
</feature>
<feature type="transit peptide" description="Mitochondrion; not cleaved" evidence="1">
    <location>
        <begin position="1"/>
        <end position="16"/>
    </location>
</feature>
<feature type="active site" description="Acyl-thioester intermediate" evidence="3">
    <location>
        <position position="92"/>
    </location>
</feature>
<feature type="active site" description="Proton donor/acceptor" evidence="3">
    <location>
        <position position="382"/>
    </location>
</feature>
<feature type="binding site" evidence="3">
    <location>
        <position position="224"/>
    </location>
    <ligand>
        <name>CoA</name>
        <dbReference type="ChEBI" id="CHEBI:57287"/>
    </ligand>
</feature>
<feature type="binding site" evidence="3">
    <location>
        <position position="227"/>
    </location>
    <ligand>
        <name>CoA</name>
        <dbReference type="ChEBI" id="CHEBI:57287"/>
    </ligand>
</feature>
<feature type="binding site" evidence="3">
    <location>
        <position position="251"/>
    </location>
    <ligand>
        <name>CoA</name>
        <dbReference type="ChEBI" id="CHEBI:57287"/>
    </ligand>
</feature>
<feature type="site" description="Increases nucleophilicity of active site Cys" evidence="3">
    <location>
        <position position="352"/>
    </location>
</feature>
<feature type="modified residue" description="N6-acetyllysine; alternate" evidence="4">
    <location>
        <position position="25"/>
    </location>
</feature>
<feature type="modified residue" description="N6-succinyllysine; alternate" evidence="4">
    <location>
        <position position="25"/>
    </location>
</feature>
<feature type="modified residue" description="Phosphothreonine" evidence="3">
    <location>
        <position position="119"/>
    </location>
</feature>
<feature type="modified residue" description="Phosphoserine" evidence="3">
    <location>
        <position position="121"/>
    </location>
</feature>
<feature type="modified residue" description="Phosphotyrosine" evidence="3">
    <location>
        <position position="127"/>
    </location>
</feature>
<feature type="modified residue" description="Phosphothreonine" evidence="4">
    <location>
        <position position="136"/>
    </location>
</feature>
<feature type="modified residue" description="N6-acetyllysine; alternate" evidence="4">
    <location>
        <position position="137"/>
    </location>
</feature>
<feature type="modified residue" description="N6-succinyllysine; alternate" evidence="4">
    <location>
        <position position="137"/>
    </location>
</feature>
<feature type="modified residue" description="Phosphoserine" evidence="3">
    <location>
        <position position="140"/>
    </location>
</feature>
<feature type="modified residue" description="N6-acetyllysine; alternate" evidence="4">
    <location>
        <position position="143"/>
    </location>
</feature>
<feature type="modified residue" description="N6-succinyllysine; alternate" evidence="4">
    <location>
        <position position="143"/>
    </location>
</feature>
<feature type="modified residue" description="N6-acetyllysine; alternate" evidence="4">
    <location>
        <position position="171"/>
    </location>
</feature>
<feature type="modified residue" description="N6-succinyllysine; alternate" evidence="4">
    <location>
        <position position="171"/>
    </location>
</feature>
<feature type="modified residue" description="N6-acetyllysine; alternate" evidence="4">
    <location>
        <position position="191"/>
    </location>
</feature>
<feature type="modified residue" description="N6-succinyllysine; alternate" evidence="4">
    <location>
        <position position="191"/>
    </location>
</feature>
<feature type="modified residue" description="N6-acetyllysine; alternate" evidence="4">
    <location>
        <position position="209"/>
    </location>
</feature>
<feature type="modified residue" description="N6-succinyllysine; alternate" evidence="4">
    <location>
        <position position="209"/>
    </location>
</feature>
<feature type="modified residue" description="N6-succinyllysine" evidence="4">
    <location>
        <position position="212"/>
    </location>
</feature>
<feature type="modified residue" description="N6-succinyllysine" evidence="4">
    <location>
        <position position="214"/>
    </location>
</feature>
<feature type="modified residue" description="N6-acetyllysine; alternate" evidence="4">
    <location>
        <position position="234"/>
    </location>
</feature>
<feature type="modified residue" description="N6-succinyllysine; alternate" evidence="4">
    <location>
        <position position="234"/>
    </location>
</feature>
<feature type="modified residue" description="N6-succinyllysine" evidence="4">
    <location>
        <position position="240"/>
    </location>
</feature>
<feature type="modified residue" description="N6-acetyllysine" evidence="4">
    <location>
        <position position="241"/>
    </location>
</feature>
<feature type="modified residue" description="N6-acetyllysine" evidence="4">
    <location>
        <position position="269"/>
    </location>
</feature>
<feature type="modified residue" description="N6-acetyllysine" evidence="4">
    <location>
        <position position="270"/>
    </location>
</feature>
<feature type="modified residue" description="N6-acetyllysine; alternate" evidence="4">
    <location>
        <position position="305"/>
    </location>
</feature>
<feature type="modified residue" description="N6-succinyllysine; alternate" evidence="4">
    <location>
        <position position="305"/>
    </location>
</feature>
<feature type="modified residue" description="Phosphoserine" evidence="4">
    <location>
        <position position="310"/>
    </location>
</feature>
<feature type="modified residue" description="N6-acetyllysine; alternate" evidence="4">
    <location>
        <position position="312"/>
    </location>
</feature>
<feature type="modified residue" description="N6-succinyllysine; alternate" evidence="4">
    <location>
        <position position="312"/>
    </location>
</feature>
<feature type="modified residue" description="Phosphoserine" evidence="3">
    <location>
        <position position="333"/>
    </location>
</feature>
<feature type="modified residue" description="N6-acetyllysine" evidence="4">
    <location>
        <position position="340"/>
    </location>
</feature>
<feature type="modified residue" description="N6-acetyllysine" evidence="4">
    <location>
        <position position="375"/>
    </location>
</feature>
<reference key="1">
    <citation type="submission" date="2007-04" db="EMBL/GenBank/DDBJ databases">
        <title>Association analysis of bovine ACAA2 and economic traits.</title>
        <authorList>
            <person name="Li H."/>
            <person name="Xu S."/>
            <person name="Gao X."/>
        </authorList>
    </citation>
    <scope>NUCLEOTIDE SEQUENCE [GENOMIC DNA / MRNA]</scope>
</reference>
<reference key="2">
    <citation type="journal article" date="2005" name="BMC Genomics">
        <title>Characterization of 954 bovine full-CDS cDNA sequences.</title>
        <authorList>
            <person name="Harhay G.P."/>
            <person name="Sonstegard T.S."/>
            <person name="Keele J.W."/>
            <person name="Heaton M.P."/>
            <person name="Clawson M.L."/>
            <person name="Snelling W.M."/>
            <person name="Wiedmann R.T."/>
            <person name="Van Tassell C.P."/>
            <person name="Smith T.P.L."/>
        </authorList>
    </citation>
    <scope>NUCLEOTIDE SEQUENCE [LARGE SCALE MRNA]</scope>
</reference>
<reference key="3">
    <citation type="submission" date="2005-08" db="EMBL/GenBank/DDBJ databases">
        <authorList>
            <consortium name="NIH - Mammalian Gene Collection (MGC) project"/>
        </authorList>
    </citation>
    <scope>NUCLEOTIDE SEQUENCE [LARGE SCALE MRNA]</scope>
    <source>
        <strain>Crossbred X Angus</strain>
        <tissue>Ileum</tissue>
    </source>
</reference>
<dbReference type="EC" id="2.3.1.16" evidence="3"/>
<dbReference type="EC" id="2.3.1.9" evidence="5"/>
<dbReference type="EC" id="3.1.2.-" evidence="3"/>
<dbReference type="EC" id="3.1.2.1" evidence="3"/>
<dbReference type="EC" id="3.1.2.2" evidence="2"/>
<dbReference type="EMBL" id="EF583004">
    <property type="protein sequence ID" value="ABU62844.1"/>
    <property type="molecule type" value="mRNA"/>
</dbReference>
<dbReference type="EMBL" id="EF583005">
    <property type="protein sequence ID" value="ABU62845.1"/>
    <property type="molecule type" value="Genomic_DNA"/>
</dbReference>
<dbReference type="EMBL" id="BT025480">
    <property type="protein sequence ID" value="ABF57436.1"/>
    <property type="molecule type" value="mRNA"/>
</dbReference>
<dbReference type="EMBL" id="BC102287">
    <property type="protein sequence ID" value="AAI02288.1"/>
    <property type="molecule type" value="mRNA"/>
</dbReference>
<dbReference type="RefSeq" id="NP_001030419.1">
    <property type="nucleotide sequence ID" value="NM_001035342.2"/>
</dbReference>
<dbReference type="SMR" id="Q3T0R7"/>
<dbReference type="FunCoup" id="Q3T0R7">
    <property type="interactions" value="1228"/>
</dbReference>
<dbReference type="IntAct" id="Q3T0R7">
    <property type="interactions" value="1"/>
</dbReference>
<dbReference type="SwissPalm" id="Q3T0R7"/>
<dbReference type="PaxDb" id="9913-ENSBTAP00000003716"/>
<dbReference type="PeptideAtlas" id="Q3T0R7"/>
<dbReference type="GeneID" id="522006"/>
<dbReference type="KEGG" id="bta:522006"/>
<dbReference type="CTD" id="10449"/>
<dbReference type="VEuPathDB" id="HostDB:ENSBTAG00000002863"/>
<dbReference type="eggNOG" id="KOG1391">
    <property type="taxonomic scope" value="Eukaryota"/>
</dbReference>
<dbReference type="HOGENOM" id="CLU_031026_0_0_1"/>
<dbReference type="InParanoid" id="Q3T0R7"/>
<dbReference type="OMA" id="RWCASSM"/>
<dbReference type="OrthoDB" id="5404651at2759"/>
<dbReference type="TreeFam" id="TF105696"/>
<dbReference type="Reactome" id="R-BTA-77289">
    <property type="pathway name" value="Mitochondrial Fatty Acid Beta-Oxidation"/>
</dbReference>
<dbReference type="SABIO-RK" id="Q3T0R7"/>
<dbReference type="UniPathway" id="UPA00659"/>
<dbReference type="Proteomes" id="UP000009136">
    <property type="component" value="Chromosome 24"/>
</dbReference>
<dbReference type="Bgee" id="ENSBTAG00000002863">
    <property type="expression patterns" value="Expressed in liver and 104 other cell types or tissues"/>
</dbReference>
<dbReference type="GO" id="GO:0005739">
    <property type="term" value="C:mitochondrion"/>
    <property type="evidence" value="ECO:0000250"/>
    <property type="project" value="UniProtKB"/>
</dbReference>
<dbReference type="GO" id="GO:0003985">
    <property type="term" value="F:acetyl-CoA C-acetyltransferase activity"/>
    <property type="evidence" value="ECO:0000250"/>
    <property type="project" value="UniProtKB"/>
</dbReference>
<dbReference type="GO" id="GO:0003988">
    <property type="term" value="F:acetyl-CoA C-acyltransferase activity"/>
    <property type="evidence" value="ECO:0000250"/>
    <property type="project" value="UniProtKB"/>
</dbReference>
<dbReference type="GO" id="GO:0003986">
    <property type="term" value="F:acetyl-CoA hydrolase activity"/>
    <property type="evidence" value="ECO:0007669"/>
    <property type="project" value="UniProtKB-EC"/>
</dbReference>
<dbReference type="GO" id="GO:0047617">
    <property type="term" value="F:fatty acyl-CoA hydrolase activity"/>
    <property type="evidence" value="ECO:0000250"/>
    <property type="project" value="UniProtKB"/>
</dbReference>
<dbReference type="GO" id="GO:0006635">
    <property type="term" value="P:fatty acid beta-oxidation"/>
    <property type="evidence" value="ECO:0000318"/>
    <property type="project" value="GO_Central"/>
</dbReference>
<dbReference type="GO" id="GO:1901029">
    <property type="term" value="P:negative regulation of mitochondrial outer membrane permeabilization involved in apoptotic signaling pathway"/>
    <property type="evidence" value="ECO:0000250"/>
    <property type="project" value="UniProtKB"/>
</dbReference>
<dbReference type="CDD" id="cd00751">
    <property type="entry name" value="thiolase"/>
    <property type="match status" value="1"/>
</dbReference>
<dbReference type="FunFam" id="3.40.47.10:FF:000010">
    <property type="entry name" value="Acetyl-CoA acetyltransferase (Thiolase)"/>
    <property type="match status" value="1"/>
</dbReference>
<dbReference type="Gene3D" id="3.40.47.10">
    <property type="match status" value="1"/>
</dbReference>
<dbReference type="InterPro" id="IPR002155">
    <property type="entry name" value="Thiolase"/>
</dbReference>
<dbReference type="InterPro" id="IPR016039">
    <property type="entry name" value="Thiolase-like"/>
</dbReference>
<dbReference type="InterPro" id="IPR020615">
    <property type="entry name" value="Thiolase_acyl_enz_int_AS"/>
</dbReference>
<dbReference type="InterPro" id="IPR020610">
    <property type="entry name" value="Thiolase_AS"/>
</dbReference>
<dbReference type="InterPro" id="IPR020617">
    <property type="entry name" value="Thiolase_C"/>
</dbReference>
<dbReference type="InterPro" id="IPR020613">
    <property type="entry name" value="Thiolase_CS"/>
</dbReference>
<dbReference type="InterPro" id="IPR020616">
    <property type="entry name" value="Thiolase_N"/>
</dbReference>
<dbReference type="NCBIfam" id="TIGR01930">
    <property type="entry name" value="AcCoA-C-Actrans"/>
    <property type="match status" value="1"/>
</dbReference>
<dbReference type="PANTHER" id="PTHR18919:SF107">
    <property type="entry name" value="ACETYL-COA ACETYLTRANSFERASE, CYTOSOLIC"/>
    <property type="match status" value="1"/>
</dbReference>
<dbReference type="PANTHER" id="PTHR18919">
    <property type="entry name" value="ACETYL-COA C-ACYLTRANSFERASE"/>
    <property type="match status" value="1"/>
</dbReference>
<dbReference type="Pfam" id="PF02803">
    <property type="entry name" value="Thiolase_C"/>
    <property type="match status" value="1"/>
</dbReference>
<dbReference type="Pfam" id="PF00108">
    <property type="entry name" value="Thiolase_N"/>
    <property type="match status" value="1"/>
</dbReference>
<dbReference type="PIRSF" id="PIRSF000429">
    <property type="entry name" value="Ac-CoA_Ac_transf"/>
    <property type="match status" value="1"/>
</dbReference>
<dbReference type="SUPFAM" id="SSF53901">
    <property type="entry name" value="Thiolase-like"/>
    <property type="match status" value="2"/>
</dbReference>
<dbReference type="PROSITE" id="PS00098">
    <property type="entry name" value="THIOLASE_1"/>
    <property type="match status" value="1"/>
</dbReference>
<dbReference type="PROSITE" id="PS00737">
    <property type="entry name" value="THIOLASE_2"/>
    <property type="match status" value="1"/>
</dbReference>
<dbReference type="PROSITE" id="PS00099">
    <property type="entry name" value="THIOLASE_3"/>
    <property type="match status" value="1"/>
</dbReference>
<evidence type="ECO:0000250" key="1"/>
<evidence type="ECO:0000250" key="2">
    <source>
        <dbReference type="UniProtKB" id="P13437"/>
    </source>
</evidence>
<evidence type="ECO:0000250" key="3">
    <source>
        <dbReference type="UniProtKB" id="P42765"/>
    </source>
</evidence>
<evidence type="ECO:0000250" key="4">
    <source>
        <dbReference type="UniProtKB" id="Q8BWT1"/>
    </source>
</evidence>
<evidence type="ECO:0000255" key="5">
    <source>
        <dbReference type="PROSITE-ProRule" id="PRU10020"/>
    </source>
</evidence>
<evidence type="ECO:0000305" key="6"/>